<gene>
    <name type="primary">COL16</name>
    <name type="ordered locus">At1g25440</name>
    <name type="ORF">F2J7.10</name>
</gene>
<keyword id="KW-0175">Coiled coil</keyword>
<keyword id="KW-0479">Metal-binding</keyword>
<keyword id="KW-0539">Nucleus</keyword>
<keyword id="KW-1185">Reference proteome</keyword>
<keyword id="KW-0862">Zinc</keyword>
<keyword id="KW-0863">Zinc-finger</keyword>
<comment type="interaction">
    <interactant intactId="EBI-15192471">
        <id>Q8RWD0</id>
    </interactant>
    <interactant intactId="EBI-15191571">
        <id>Q4PSE2</id>
        <label>NFYC8</label>
    </interactant>
    <organismsDiffer>false</organismsDiffer>
    <experiments>3</experiments>
</comment>
<comment type="subcellular location">
    <subcellularLocation>
        <location evidence="3">Nucleus</location>
    </subcellularLocation>
</comment>
<comment type="similarity">
    <text evidence="5">Belongs to the CONSTANS family.</text>
</comment>
<comment type="sequence caution" evidence="5">
    <conflict type="erroneous initiation">
        <sequence resource="EMBL-CDS" id="AAG50803"/>
    </conflict>
</comment>
<dbReference type="EMBL" id="AC079281">
    <property type="protein sequence ID" value="AAG50803.1"/>
    <property type="status" value="ALT_INIT"/>
    <property type="molecule type" value="Genomic_DNA"/>
</dbReference>
<dbReference type="EMBL" id="CP002684">
    <property type="protein sequence ID" value="AEE30625.1"/>
    <property type="molecule type" value="Genomic_DNA"/>
</dbReference>
<dbReference type="EMBL" id="AY093174">
    <property type="protein sequence ID" value="AAM13173.1"/>
    <property type="molecule type" value="mRNA"/>
</dbReference>
<dbReference type="PIR" id="E86384">
    <property type="entry name" value="E86384"/>
</dbReference>
<dbReference type="RefSeq" id="NP_173915.2">
    <property type="nucleotide sequence ID" value="NM_102355.5"/>
</dbReference>
<dbReference type="SMR" id="Q8RWD0"/>
<dbReference type="BioGRID" id="24367">
    <property type="interactions" value="5"/>
</dbReference>
<dbReference type="FunCoup" id="Q8RWD0">
    <property type="interactions" value="826"/>
</dbReference>
<dbReference type="IntAct" id="Q8RWD0">
    <property type="interactions" value="5"/>
</dbReference>
<dbReference type="STRING" id="3702.Q8RWD0"/>
<dbReference type="iPTMnet" id="Q8RWD0"/>
<dbReference type="PaxDb" id="3702-AT1G25440.1"/>
<dbReference type="EnsemblPlants" id="AT1G25440.1">
    <property type="protein sequence ID" value="AT1G25440.1"/>
    <property type="gene ID" value="AT1G25440"/>
</dbReference>
<dbReference type="GeneID" id="839130"/>
<dbReference type="Gramene" id="AT1G25440.1">
    <property type="protein sequence ID" value="AT1G25440.1"/>
    <property type="gene ID" value="AT1G25440"/>
</dbReference>
<dbReference type="KEGG" id="ath:AT1G25440"/>
<dbReference type="Araport" id="AT1G25440"/>
<dbReference type="TAIR" id="AT1G25440">
    <property type="gene designation" value="BBX15"/>
</dbReference>
<dbReference type="eggNOG" id="KOG1601">
    <property type="taxonomic scope" value="Eukaryota"/>
</dbReference>
<dbReference type="HOGENOM" id="CLU_035373_0_0_1"/>
<dbReference type="InParanoid" id="Q8RWD0"/>
<dbReference type="OMA" id="VTESYAM"/>
<dbReference type="PhylomeDB" id="Q8RWD0"/>
<dbReference type="PRO" id="PR:Q8RWD0"/>
<dbReference type="Proteomes" id="UP000006548">
    <property type="component" value="Chromosome 1"/>
</dbReference>
<dbReference type="ExpressionAtlas" id="Q8RWD0">
    <property type="expression patterns" value="baseline and differential"/>
</dbReference>
<dbReference type="GO" id="GO:0005634">
    <property type="term" value="C:nucleus"/>
    <property type="evidence" value="ECO:0007669"/>
    <property type="project" value="UniProtKB-SubCell"/>
</dbReference>
<dbReference type="GO" id="GO:0003700">
    <property type="term" value="F:DNA-binding transcription factor activity"/>
    <property type="evidence" value="ECO:0000250"/>
    <property type="project" value="TAIR"/>
</dbReference>
<dbReference type="GO" id="GO:0008270">
    <property type="term" value="F:zinc ion binding"/>
    <property type="evidence" value="ECO:0007669"/>
    <property type="project" value="UniProtKB-KW"/>
</dbReference>
<dbReference type="GO" id="GO:0006355">
    <property type="term" value="P:regulation of DNA-templated transcription"/>
    <property type="evidence" value="ECO:0000304"/>
    <property type="project" value="TAIR"/>
</dbReference>
<dbReference type="CDD" id="cd19821">
    <property type="entry name" value="Bbox1_BBX-like"/>
    <property type="match status" value="1"/>
</dbReference>
<dbReference type="InterPro" id="IPR010402">
    <property type="entry name" value="CCT_domain"/>
</dbReference>
<dbReference type="InterPro" id="IPR049808">
    <property type="entry name" value="CONSTANS-like_Bbox1"/>
</dbReference>
<dbReference type="InterPro" id="IPR052453">
    <property type="entry name" value="CONSTANS-like_ZF"/>
</dbReference>
<dbReference type="InterPro" id="IPR000315">
    <property type="entry name" value="Znf_B-box"/>
</dbReference>
<dbReference type="PANTHER" id="PTHR31874">
    <property type="entry name" value="CCT MOTIF FAMILY PROTEIN, EXPRESSED"/>
    <property type="match status" value="1"/>
</dbReference>
<dbReference type="PANTHER" id="PTHR31874:SF56">
    <property type="entry name" value="ZINC FINGER PROTEIN CONSTANS-LIKE 16"/>
    <property type="match status" value="1"/>
</dbReference>
<dbReference type="Pfam" id="PF06203">
    <property type="entry name" value="CCT"/>
    <property type="match status" value="1"/>
</dbReference>
<dbReference type="Pfam" id="PF00643">
    <property type="entry name" value="zf-B_box"/>
    <property type="match status" value="1"/>
</dbReference>
<dbReference type="SMART" id="SM00336">
    <property type="entry name" value="BBOX"/>
    <property type="match status" value="1"/>
</dbReference>
<dbReference type="PROSITE" id="PS51017">
    <property type="entry name" value="CCT"/>
    <property type="match status" value="1"/>
</dbReference>
<dbReference type="PROSITE" id="PS50119">
    <property type="entry name" value="ZF_BBOX"/>
    <property type="match status" value="1"/>
</dbReference>
<accession>Q8RWD0</accession>
<accession>Q9C6L4</accession>
<feature type="chain" id="PRO_0000113293" description="Zinc finger protein CONSTANS-LIKE 16">
    <location>
        <begin position="1"/>
        <end position="417"/>
    </location>
</feature>
<feature type="domain" description="CCT" evidence="3">
    <location>
        <begin position="361"/>
        <end position="403"/>
    </location>
</feature>
<feature type="zinc finger region" description="B box-type; atypical" evidence="2">
    <location>
        <begin position="17"/>
        <end position="59"/>
    </location>
</feature>
<feature type="region of interest" description="Disordered" evidence="4">
    <location>
        <begin position="63"/>
        <end position="105"/>
    </location>
</feature>
<feature type="coiled-coil region" evidence="1">
    <location>
        <begin position="212"/>
        <end position="239"/>
    </location>
</feature>
<feature type="binding site" evidence="2">
    <location>
        <position position="17"/>
    </location>
    <ligand>
        <name>Zn(2+)</name>
        <dbReference type="ChEBI" id="CHEBI:29105"/>
    </ligand>
</feature>
<feature type="binding site" evidence="2">
    <location>
        <position position="20"/>
    </location>
    <ligand>
        <name>Zn(2+)</name>
        <dbReference type="ChEBI" id="CHEBI:29105"/>
    </ligand>
</feature>
<feature type="binding site" evidence="2">
    <location>
        <position position="40"/>
    </location>
    <ligand>
        <name>Zn(2+)</name>
        <dbReference type="ChEBI" id="CHEBI:29105"/>
    </ligand>
</feature>
<feature type="binding site" evidence="2">
    <location>
        <position position="45"/>
    </location>
    <ligand>
        <name>Zn(2+)</name>
        <dbReference type="ChEBI" id="CHEBI:29105"/>
    </ligand>
</feature>
<feature type="sequence conflict" description="In Ref. 3; AAM13173." evidence="5" ref="3">
    <original>V</original>
    <variation>L</variation>
    <location>
        <position position="140"/>
    </location>
</feature>
<feature type="sequence conflict" description="In Ref. 3; AAM13173." evidence="5" ref="3">
    <original>G</original>
    <variation>E</variation>
    <location>
        <position position="211"/>
    </location>
</feature>
<proteinExistence type="evidence at protein level"/>
<sequence length="417" mass="46932">MMKSLANAVGAKTARACDSCVKRRARWYCAADDAFLCQSCDSLVHSANPLARRHERVRLKTASPAVVKHSNHSSASPPHEVATWHHGFTRKARTPRGSGKKNNSSIFHDLVPDISIEDQTDNYELEEQLICQVPVLDPLVSEQFLNDVVEPKIEFPMIRSGLMIEEEEDNAESCLNGFFPTDMELEEFAADVETLLGRGLDTESYAMEELGLSNSEMFKIEKDEIEEEVEEIKAMSMDIFDDDRKDVDGTVPFELSFDYESSHKTSEEEVMKNVESSGECVVKVKEEEHKNVLMLRLNYDSVISTWGGQGPPWSSGEPPERDMDISGWPAFSMVENGGESTHQKQYVGGCLPSSGFGDGGREARVSRYREKRRTRLFSKKIRYEVRKLNAEKRPRMKGRFVKRASLAAAASPLGVNY</sequence>
<organism>
    <name type="scientific">Arabidopsis thaliana</name>
    <name type="common">Mouse-ear cress</name>
    <dbReference type="NCBI Taxonomy" id="3702"/>
    <lineage>
        <taxon>Eukaryota</taxon>
        <taxon>Viridiplantae</taxon>
        <taxon>Streptophyta</taxon>
        <taxon>Embryophyta</taxon>
        <taxon>Tracheophyta</taxon>
        <taxon>Spermatophyta</taxon>
        <taxon>Magnoliopsida</taxon>
        <taxon>eudicotyledons</taxon>
        <taxon>Gunneridae</taxon>
        <taxon>Pentapetalae</taxon>
        <taxon>rosids</taxon>
        <taxon>malvids</taxon>
        <taxon>Brassicales</taxon>
        <taxon>Brassicaceae</taxon>
        <taxon>Camelineae</taxon>
        <taxon>Arabidopsis</taxon>
    </lineage>
</organism>
<name>COL16_ARATH</name>
<evidence type="ECO:0000255" key="1"/>
<evidence type="ECO:0000255" key="2">
    <source>
        <dbReference type="PROSITE-ProRule" id="PRU00024"/>
    </source>
</evidence>
<evidence type="ECO:0000255" key="3">
    <source>
        <dbReference type="PROSITE-ProRule" id="PRU00357"/>
    </source>
</evidence>
<evidence type="ECO:0000256" key="4">
    <source>
        <dbReference type="SAM" id="MobiDB-lite"/>
    </source>
</evidence>
<evidence type="ECO:0000305" key="5"/>
<reference key="1">
    <citation type="journal article" date="2000" name="Nature">
        <title>Sequence and analysis of chromosome 1 of the plant Arabidopsis thaliana.</title>
        <authorList>
            <person name="Theologis A."/>
            <person name="Ecker J.R."/>
            <person name="Palm C.J."/>
            <person name="Federspiel N.A."/>
            <person name="Kaul S."/>
            <person name="White O."/>
            <person name="Alonso J."/>
            <person name="Altafi H."/>
            <person name="Araujo R."/>
            <person name="Bowman C.L."/>
            <person name="Brooks S.Y."/>
            <person name="Buehler E."/>
            <person name="Chan A."/>
            <person name="Chao Q."/>
            <person name="Chen H."/>
            <person name="Cheuk R.F."/>
            <person name="Chin C.W."/>
            <person name="Chung M.K."/>
            <person name="Conn L."/>
            <person name="Conway A.B."/>
            <person name="Conway A.R."/>
            <person name="Creasy T.H."/>
            <person name="Dewar K."/>
            <person name="Dunn P."/>
            <person name="Etgu P."/>
            <person name="Feldblyum T.V."/>
            <person name="Feng J.-D."/>
            <person name="Fong B."/>
            <person name="Fujii C.Y."/>
            <person name="Gill J.E."/>
            <person name="Goldsmith A.D."/>
            <person name="Haas B."/>
            <person name="Hansen N.F."/>
            <person name="Hughes B."/>
            <person name="Huizar L."/>
            <person name="Hunter J.L."/>
            <person name="Jenkins J."/>
            <person name="Johnson-Hopson C."/>
            <person name="Khan S."/>
            <person name="Khaykin E."/>
            <person name="Kim C.J."/>
            <person name="Koo H.L."/>
            <person name="Kremenetskaia I."/>
            <person name="Kurtz D.B."/>
            <person name="Kwan A."/>
            <person name="Lam B."/>
            <person name="Langin-Hooper S."/>
            <person name="Lee A."/>
            <person name="Lee J.M."/>
            <person name="Lenz C.A."/>
            <person name="Li J.H."/>
            <person name="Li Y.-P."/>
            <person name="Lin X."/>
            <person name="Liu S.X."/>
            <person name="Liu Z.A."/>
            <person name="Luros J.S."/>
            <person name="Maiti R."/>
            <person name="Marziali A."/>
            <person name="Militscher J."/>
            <person name="Miranda M."/>
            <person name="Nguyen M."/>
            <person name="Nierman W.C."/>
            <person name="Osborne B.I."/>
            <person name="Pai G."/>
            <person name="Peterson J."/>
            <person name="Pham P.K."/>
            <person name="Rizzo M."/>
            <person name="Rooney T."/>
            <person name="Rowley D."/>
            <person name="Sakano H."/>
            <person name="Salzberg S.L."/>
            <person name="Schwartz J.R."/>
            <person name="Shinn P."/>
            <person name="Southwick A.M."/>
            <person name="Sun H."/>
            <person name="Tallon L.J."/>
            <person name="Tambunga G."/>
            <person name="Toriumi M.J."/>
            <person name="Town C.D."/>
            <person name="Utterback T."/>
            <person name="Van Aken S."/>
            <person name="Vaysberg M."/>
            <person name="Vysotskaia V.S."/>
            <person name="Walker M."/>
            <person name="Wu D."/>
            <person name="Yu G."/>
            <person name="Fraser C.M."/>
            <person name="Venter J.C."/>
            <person name="Davis R.W."/>
        </authorList>
    </citation>
    <scope>NUCLEOTIDE SEQUENCE [LARGE SCALE GENOMIC DNA]</scope>
    <source>
        <strain>cv. Columbia</strain>
    </source>
</reference>
<reference key="2">
    <citation type="journal article" date="2017" name="Plant J.">
        <title>Araport11: a complete reannotation of the Arabidopsis thaliana reference genome.</title>
        <authorList>
            <person name="Cheng C.Y."/>
            <person name="Krishnakumar V."/>
            <person name="Chan A.P."/>
            <person name="Thibaud-Nissen F."/>
            <person name="Schobel S."/>
            <person name="Town C.D."/>
        </authorList>
    </citation>
    <scope>GENOME REANNOTATION</scope>
    <source>
        <strain>cv. Columbia</strain>
    </source>
</reference>
<reference key="3">
    <citation type="journal article" date="2003" name="Science">
        <title>Empirical analysis of transcriptional activity in the Arabidopsis genome.</title>
        <authorList>
            <person name="Yamada K."/>
            <person name="Lim J."/>
            <person name="Dale J.M."/>
            <person name="Chen H."/>
            <person name="Shinn P."/>
            <person name="Palm C.J."/>
            <person name="Southwick A.M."/>
            <person name="Wu H.C."/>
            <person name="Kim C.J."/>
            <person name="Nguyen M."/>
            <person name="Pham P.K."/>
            <person name="Cheuk R.F."/>
            <person name="Karlin-Newmann G."/>
            <person name="Liu S.X."/>
            <person name="Lam B."/>
            <person name="Sakano H."/>
            <person name="Wu T."/>
            <person name="Yu G."/>
            <person name="Miranda M."/>
            <person name="Quach H.L."/>
            <person name="Tripp M."/>
            <person name="Chang C.H."/>
            <person name="Lee J.M."/>
            <person name="Toriumi M.J."/>
            <person name="Chan M.M."/>
            <person name="Tang C.C."/>
            <person name="Onodera C.S."/>
            <person name="Deng J.M."/>
            <person name="Akiyama K."/>
            <person name="Ansari Y."/>
            <person name="Arakawa T."/>
            <person name="Banh J."/>
            <person name="Banno F."/>
            <person name="Bowser L."/>
            <person name="Brooks S.Y."/>
            <person name="Carninci P."/>
            <person name="Chao Q."/>
            <person name="Choy N."/>
            <person name="Enju A."/>
            <person name="Goldsmith A.D."/>
            <person name="Gurjal M."/>
            <person name="Hansen N.F."/>
            <person name="Hayashizaki Y."/>
            <person name="Johnson-Hopson C."/>
            <person name="Hsuan V.W."/>
            <person name="Iida K."/>
            <person name="Karnes M."/>
            <person name="Khan S."/>
            <person name="Koesema E."/>
            <person name="Ishida J."/>
            <person name="Jiang P.X."/>
            <person name="Jones T."/>
            <person name="Kawai J."/>
            <person name="Kamiya A."/>
            <person name="Meyers C."/>
            <person name="Nakajima M."/>
            <person name="Narusaka M."/>
            <person name="Seki M."/>
            <person name="Sakurai T."/>
            <person name="Satou M."/>
            <person name="Tamse R."/>
            <person name="Vaysberg M."/>
            <person name="Wallender E.K."/>
            <person name="Wong C."/>
            <person name="Yamamura Y."/>
            <person name="Yuan S."/>
            <person name="Shinozaki K."/>
            <person name="Davis R.W."/>
            <person name="Theologis A."/>
            <person name="Ecker J.R."/>
        </authorList>
    </citation>
    <scope>NUCLEOTIDE SEQUENCE [LARGE SCALE MRNA]</scope>
    <source>
        <strain>cv. Columbia</strain>
    </source>
</reference>
<reference key="4">
    <citation type="journal article" date="2003" name="Plant Physiol.">
        <title>The evolution of CONSTANS-like gene families in barley, rice, and Arabidopsis.</title>
        <authorList>
            <person name="Griffiths S."/>
            <person name="Dunford R.P."/>
            <person name="Coupland G."/>
            <person name="Laurie D.A."/>
        </authorList>
    </citation>
    <scope>GENE FAMILY</scope>
    <scope>NOMENCLATURE</scope>
</reference>
<protein>
    <recommendedName>
        <fullName>Zinc finger protein CONSTANS-LIKE 16</fullName>
    </recommendedName>
</protein>